<proteinExistence type="evidence at protein level"/>
<protein>
    <recommendedName>
        <fullName evidence="18">Calcium load-activated calcium channel</fullName>
        <shortName evidence="18">CLAC channel</shortName>
    </recommendedName>
    <alternativeName>
        <fullName evidence="17">GEL complex subunit TMCO1</fullName>
    </alternativeName>
    <alternativeName>
        <fullName evidence="17">Transmembrane and coiled-coil domain-containing protein 1</fullName>
    </alternativeName>
    <alternativeName>
        <fullName evidence="17">Transmembrane and coiled-coil domains protein 4</fullName>
    </alternativeName>
    <alternativeName>
        <fullName evidence="15">Xenogeneic cross-immune protein PCIA3</fullName>
    </alternativeName>
</protein>
<gene>
    <name evidence="19" type="primary">TMCO1</name>
    <name evidence="19" type="synonym">TMCC4</name>
    <name evidence="16" type="ORF">PNAS-10</name>
    <name evidence="16" type="ORF">PNAS-136</name>
    <name evidence="14" type="ORF">UNQ151/PRO177</name>
</gene>
<organism>
    <name type="scientific">Homo sapiens</name>
    <name type="common">Human</name>
    <dbReference type="NCBI Taxonomy" id="9606"/>
    <lineage>
        <taxon>Eukaryota</taxon>
        <taxon>Metazoa</taxon>
        <taxon>Chordata</taxon>
        <taxon>Craniata</taxon>
        <taxon>Vertebrata</taxon>
        <taxon>Euteleostomi</taxon>
        <taxon>Mammalia</taxon>
        <taxon>Eutheria</taxon>
        <taxon>Euarchontoglires</taxon>
        <taxon>Primates</taxon>
        <taxon>Haplorrhini</taxon>
        <taxon>Catarrhini</taxon>
        <taxon>Hominidae</taxon>
        <taxon>Homo</taxon>
    </lineage>
</organism>
<evidence type="ECO:0000250" key="1">
    <source>
        <dbReference type="UniProtKB" id="A0A8I3PI99"/>
    </source>
</evidence>
<evidence type="ECO:0000250" key="2">
    <source>
        <dbReference type="UniProtKB" id="C5HGF3"/>
    </source>
</evidence>
<evidence type="ECO:0000250" key="3">
    <source>
        <dbReference type="UniProtKB" id="Q921L3"/>
    </source>
</evidence>
<evidence type="ECO:0000255" key="4"/>
<evidence type="ECO:0000269" key="5">
    <source>
    </source>
</evidence>
<evidence type="ECO:0000269" key="6">
    <source>
    </source>
</evidence>
<evidence type="ECO:0000269" key="7">
    <source>
    </source>
</evidence>
<evidence type="ECO:0000269" key="8">
    <source>
    </source>
</evidence>
<evidence type="ECO:0000269" key="9">
    <source>
    </source>
</evidence>
<evidence type="ECO:0000269" key="10">
    <source>
    </source>
</evidence>
<evidence type="ECO:0000269" key="11">
    <source>
    </source>
</evidence>
<evidence type="ECO:0000269" key="12">
    <source>
    </source>
</evidence>
<evidence type="ECO:0000269" key="13">
    <source>
    </source>
</evidence>
<evidence type="ECO:0000303" key="14">
    <source>
    </source>
</evidence>
<evidence type="ECO:0000303" key="15">
    <source ref="2"/>
</evidence>
<evidence type="ECO:0000303" key="16">
    <source ref="4"/>
</evidence>
<evidence type="ECO:0000305" key="17"/>
<evidence type="ECO:0000305" key="18">
    <source>
    </source>
</evidence>
<evidence type="ECO:0000312" key="19">
    <source>
        <dbReference type="HGNC" id="HGNC:18188"/>
    </source>
</evidence>
<evidence type="ECO:0007744" key="20">
    <source>
    </source>
</evidence>
<evidence type="ECO:0007744" key="21">
    <source>
    </source>
</evidence>
<evidence type="ECO:0007744" key="22">
    <source>
    </source>
</evidence>
<dbReference type="EMBL" id="AB020980">
    <property type="protein sequence ID" value="BAA86974.1"/>
    <property type="molecule type" value="mRNA"/>
</dbReference>
<dbReference type="EMBL" id="AY763589">
    <property type="protein sequence ID" value="AAV34755.1"/>
    <property type="molecule type" value="mRNA"/>
</dbReference>
<dbReference type="EMBL" id="AF070626">
    <property type="protein sequence ID" value="AAC25388.1"/>
    <property type="molecule type" value="mRNA"/>
</dbReference>
<dbReference type="EMBL" id="AF274935">
    <property type="protein sequence ID" value="AAK07514.1"/>
    <property type="status" value="ALT_FRAME"/>
    <property type="molecule type" value="mRNA"/>
</dbReference>
<dbReference type="EMBL" id="AF277194">
    <property type="protein sequence ID" value="AAK07549.1"/>
    <property type="status" value="ALT_FRAME"/>
    <property type="molecule type" value="mRNA"/>
</dbReference>
<dbReference type="EMBL" id="AY359027">
    <property type="protein sequence ID" value="AAQ89386.1"/>
    <property type="molecule type" value="mRNA"/>
</dbReference>
<dbReference type="EMBL" id="AK316610">
    <property type="protein sequence ID" value="BAG38197.1"/>
    <property type="molecule type" value="mRNA"/>
</dbReference>
<dbReference type="EMBL" id="AL451074">
    <property type="status" value="NOT_ANNOTATED_CDS"/>
    <property type="molecule type" value="Genomic_DNA"/>
</dbReference>
<dbReference type="EMBL" id="CH471067">
    <property type="protein sequence ID" value="EAW90763.1"/>
    <property type="molecule type" value="Genomic_DNA"/>
</dbReference>
<dbReference type="EMBL" id="BC000104">
    <property type="protein sequence ID" value="AAH00104.1"/>
    <property type="molecule type" value="mRNA"/>
</dbReference>
<dbReference type="CCDS" id="CCDS1251.3">
    <molecule id="Q9UM00-1"/>
</dbReference>
<dbReference type="RefSeq" id="NP_061899.3">
    <molecule id="Q9UM00-1"/>
    <property type="nucleotide sequence ID" value="NM_019026.6"/>
</dbReference>
<dbReference type="PDB" id="6W6L">
    <property type="method" value="EM"/>
    <property type="resolution" value="3.84 A"/>
    <property type="chains" value="6=52-239"/>
</dbReference>
<dbReference type="PDBsum" id="6W6L"/>
<dbReference type="SMR" id="Q9UM00"/>
<dbReference type="BioGRID" id="119995">
    <property type="interactions" value="216"/>
</dbReference>
<dbReference type="ComplexPortal" id="CPX-5606">
    <property type="entry name" value="GEL multi-spanning membrane protein insertion complex"/>
</dbReference>
<dbReference type="CORUM" id="Q9UM00"/>
<dbReference type="FunCoup" id="Q9UM00">
    <property type="interactions" value="2287"/>
</dbReference>
<dbReference type="IntAct" id="Q9UM00">
    <property type="interactions" value="93"/>
</dbReference>
<dbReference type="MINT" id="Q9UM00"/>
<dbReference type="STRING" id="9606.ENSP00000480514"/>
<dbReference type="TCDB" id="1.A.106.1.1">
    <property type="family name" value="the calcium load-activated calcium channel (clac) family"/>
</dbReference>
<dbReference type="GlyGen" id="Q9UM00">
    <property type="glycosylation" value="2 sites, 1 O-linked glycan (2 sites)"/>
</dbReference>
<dbReference type="iPTMnet" id="Q9UM00"/>
<dbReference type="PhosphoSitePlus" id="Q9UM00"/>
<dbReference type="SwissPalm" id="Q9UM00"/>
<dbReference type="BioMuta" id="TMCO1"/>
<dbReference type="DMDM" id="74753399"/>
<dbReference type="jPOST" id="Q9UM00"/>
<dbReference type="MassIVE" id="Q9UM00"/>
<dbReference type="PaxDb" id="9606-ENSP00000480514"/>
<dbReference type="PeptideAtlas" id="Q9UM00"/>
<dbReference type="ProteomicsDB" id="85163">
    <molecule id="Q9UM00-1"/>
</dbReference>
<dbReference type="ProteomicsDB" id="85164">
    <molecule id="Q9UM00-2"/>
</dbReference>
<dbReference type="Pumba" id="Q9UM00"/>
<dbReference type="TopDownProteomics" id="Q9UM00-1">
    <molecule id="Q9UM00-1"/>
</dbReference>
<dbReference type="Antibodypedia" id="34332">
    <property type="antibodies" value="54 antibodies from 16 providers"/>
</dbReference>
<dbReference type="DNASU" id="54499"/>
<dbReference type="Ensembl" id="ENST00000367881.11">
    <molecule id="Q9UM00-1"/>
    <property type="protein sequence ID" value="ENSP00000356856.6"/>
    <property type="gene ID" value="ENSG00000143183.18"/>
</dbReference>
<dbReference type="Ensembl" id="ENST00000612311.4">
    <molecule id="Q9UM00-3"/>
    <property type="protein sequence ID" value="ENSP00000480514.1"/>
    <property type="gene ID" value="ENSG00000143183.18"/>
</dbReference>
<dbReference type="GeneID" id="54499"/>
<dbReference type="KEGG" id="hsa:54499"/>
<dbReference type="MANE-Select" id="ENST00000367881.11">
    <molecule id="Q9UM00-1"/>
    <property type="protein sequence ID" value="ENSP00000356856.6"/>
    <property type="RefSeq nucleotide sequence ID" value="NM_019026.6"/>
    <property type="RefSeq protein sequence ID" value="NP_061899.3"/>
</dbReference>
<dbReference type="UCSC" id="uc001gdj.6">
    <property type="organism name" value="human"/>
</dbReference>
<dbReference type="UCSC" id="uc057mzb.1">
    <molecule id="Q9UM00-3"/>
    <property type="organism name" value="human"/>
</dbReference>
<dbReference type="AGR" id="HGNC:18188"/>
<dbReference type="CTD" id="54499"/>
<dbReference type="DisGeNET" id="54499"/>
<dbReference type="GeneCards" id="TMCO1"/>
<dbReference type="HGNC" id="HGNC:18188">
    <property type="gene designation" value="TMCO1"/>
</dbReference>
<dbReference type="HPA" id="ENSG00000143183">
    <property type="expression patterns" value="Low tissue specificity"/>
</dbReference>
<dbReference type="MalaCards" id="TMCO1"/>
<dbReference type="MIM" id="137760">
    <property type="type" value="phenotype"/>
</dbReference>
<dbReference type="MIM" id="213980">
    <property type="type" value="phenotype"/>
</dbReference>
<dbReference type="MIM" id="614123">
    <property type="type" value="gene"/>
</dbReference>
<dbReference type="neXtProt" id="NX_Q9UM00"/>
<dbReference type="OpenTargets" id="ENSG00000143183"/>
<dbReference type="Orphanet" id="1394">
    <property type="disease" value="Cerebrofaciothoracic dysplasia"/>
</dbReference>
<dbReference type="PharmGKB" id="PA142670792"/>
<dbReference type="VEuPathDB" id="HostDB:ENSG00000143183"/>
<dbReference type="eggNOG" id="KOG3312">
    <property type="taxonomic scope" value="Eukaryota"/>
</dbReference>
<dbReference type="GeneTree" id="ENSGT00390000002659"/>
<dbReference type="HOGENOM" id="CLU_081121_0_0_1"/>
<dbReference type="InParanoid" id="Q9UM00"/>
<dbReference type="OrthoDB" id="342726at2759"/>
<dbReference type="PAN-GO" id="Q9UM00">
    <property type="GO annotations" value="4 GO annotations based on evolutionary models"/>
</dbReference>
<dbReference type="PhylomeDB" id="Q9UM00"/>
<dbReference type="TreeFam" id="TF315045"/>
<dbReference type="PathwayCommons" id="Q9UM00"/>
<dbReference type="SignaLink" id="Q9UM00"/>
<dbReference type="BioGRID-ORCS" id="54499">
    <property type="hits" value="9 hits in 1156 CRISPR screens"/>
</dbReference>
<dbReference type="ChiTaRS" id="TMCO1">
    <property type="organism name" value="human"/>
</dbReference>
<dbReference type="GeneWiki" id="TMCO1"/>
<dbReference type="GenomeRNAi" id="54499"/>
<dbReference type="Pharos" id="Q9UM00">
    <property type="development level" value="Tbio"/>
</dbReference>
<dbReference type="PRO" id="PR:Q9UM00"/>
<dbReference type="Proteomes" id="UP000005640">
    <property type="component" value="Chromosome 1"/>
</dbReference>
<dbReference type="RNAct" id="Q9UM00">
    <property type="molecule type" value="protein"/>
</dbReference>
<dbReference type="Bgee" id="ENSG00000143183">
    <property type="expression patterns" value="Expressed in calcaneal tendon and 204 other cell types or tissues"/>
</dbReference>
<dbReference type="ExpressionAtlas" id="Q9UM00">
    <property type="expression patterns" value="baseline and differential"/>
</dbReference>
<dbReference type="GO" id="GO:0005737">
    <property type="term" value="C:cytoplasm"/>
    <property type="evidence" value="ECO:0000318"/>
    <property type="project" value="GO_Central"/>
</dbReference>
<dbReference type="GO" id="GO:0005783">
    <property type="term" value="C:endoplasmic reticulum"/>
    <property type="evidence" value="ECO:0000314"/>
    <property type="project" value="HPA"/>
</dbReference>
<dbReference type="GO" id="GO:0005789">
    <property type="term" value="C:endoplasmic reticulum membrane"/>
    <property type="evidence" value="ECO:0000314"/>
    <property type="project" value="UniProtKB"/>
</dbReference>
<dbReference type="GO" id="GO:0000139">
    <property type="term" value="C:Golgi membrane"/>
    <property type="evidence" value="ECO:0007669"/>
    <property type="project" value="UniProtKB-SubCell"/>
</dbReference>
<dbReference type="GO" id="GO:0031966">
    <property type="term" value="C:mitochondrial membrane"/>
    <property type="evidence" value="ECO:0007669"/>
    <property type="project" value="UniProtKB-SubCell"/>
</dbReference>
<dbReference type="GO" id="GO:0160064">
    <property type="term" value="C:multi-pass translocon complex"/>
    <property type="evidence" value="ECO:0000314"/>
    <property type="project" value="UniProtKB"/>
</dbReference>
<dbReference type="GO" id="GO:0005262">
    <property type="term" value="F:calcium channel activity"/>
    <property type="evidence" value="ECO:0000314"/>
    <property type="project" value="UniProtKB"/>
</dbReference>
<dbReference type="GO" id="GO:0043022">
    <property type="term" value="F:ribosome binding"/>
    <property type="evidence" value="ECO:0000314"/>
    <property type="project" value="UniProtKB"/>
</dbReference>
<dbReference type="GO" id="GO:0070588">
    <property type="term" value="P:calcium ion transmembrane transport"/>
    <property type="evidence" value="ECO:0000314"/>
    <property type="project" value="UniProtKB"/>
</dbReference>
<dbReference type="GO" id="GO:0032469">
    <property type="term" value="P:endoplasmic reticulum calcium ion homeostasis"/>
    <property type="evidence" value="ECO:0000314"/>
    <property type="project" value="UniProtKB"/>
</dbReference>
<dbReference type="GO" id="GO:0006983">
    <property type="term" value="P:ER overload response"/>
    <property type="evidence" value="ECO:0000314"/>
    <property type="project" value="UniProtKB"/>
</dbReference>
<dbReference type="GO" id="GO:0160063">
    <property type="term" value="P:multi-pass transmembrane protein insertion into ER membrane"/>
    <property type="evidence" value="ECO:0000314"/>
    <property type="project" value="UniProtKB"/>
</dbReference>
<dbReference type="GO" id="GO:0001503">
    <property type="term" value="P:ossification"/>
    <property type="evidence" value="ECO:0000250"/>
    <property type="project" value="UniProtKB"/>
</dbReference>
<dbReference type="InterPro" id="IPR002809">
    <property type="entry name" value="EMC3/TMCO1"/>
</dbReference>
<dbReference type="InterPro" id="IPR008559">
    <property type="entry name" value="TMCO1"/>
</dbReference>
<dbReference type="PANTHER" id="PTHR20917:SF0">
    <property type="entry name" value="CALCIUM LOAD-ACTIVATED CALCIUM CHANNEL"/>
    <property type="match status" value="1"/>
</dbReference>
<dbReference type="PANTHER" id="PTHR20917">
    <property type="entry name" value="PNAS-RELATED"/>
    <property type="match status" value="1"/>
</dbReference>
<dbReference type="Pfam" id="PF01956">
    <property type="entry name" value="EMC3_TMCO1"/>
    <property type="match status" value="1"/>
</dbReference>
<dbReference type="SMART" id="SM01415">
    <property type="entry name" value="DUF106"/>
    <property type="match status" value="1"/>
</dbReference>
<sequence length="239" mass="27079">MPRKRKCDLRAVRVGLLLGGGGVYGSRFRFTFPGCRALSPWRVRVQRRRCEMSTMFADTLLIVFISVCTALLAEGITWVLVYRTDKYKRLKAEVEKQSKKLEKKKETITESAGRQQKKKIERQEEKLKNNNRDLSMVRMKSMFAIGFCFTALMGMFNSIFDGRVVAKLPFTPLSYIQGLSHRNLLGDDTTDCSFIFLYILCTMSIRQNIQKILGLAPSRAATKQAGGFLGPPPPSGKFS</sequence>
<keyword id="KW-0002">3D-structure</keyword>
<keyword id="KW-0024">Alternative initiation</keyword>
<keyword id="KW-0025">Alternative splicing</keyword>
<keyword id="KW-0106">Calcium</keyword>
<keyword id="KW-0107">Calcium channel</keyword>
<keyword id="KW-0109">Calcium transport</keyword>
<keyword id="KW-0175">Coiled coil</keyword>
<keyword id="KW-0225">Disease variant</keyword>
<keyword id="KW-0256">Endoplasmic reticulum</keyword>
<keyword id="KW-0955">Glaucoma</keyword>
<keyword id="KW-0333">Golgi apparatus</keyword>
<keyword id="KW-0991">Intellectual disability</keyword>
<keyword id="KW-0407">Ion channel</keyword>
<keyword id="KW-0406">Ion transport</keyword>
<keyword id="KW-0472">Membrane</keyword>
<keyword id="KW-0496">Mitochondrion</keyword>
<keyword id="KW-0597">Phosphoprotein</keyword>
<keyword id="KW-1267">Proteomics identification</keyword>
<keyword id="KW-1185">Reference proteome</keyword>
<keyword id="KW-0812">Transmembrane</keyword>
<keyword id="KW-1133">Transmembrane helix</keyword>
<keyword id="KW-0813">Transport</keyword>
<name>TMCO1_HUMAN</name>
<feature type="chain" id="PRO_0000244076" description="Calcium load-activated calcium channel">
    <location>
        <begin position="1"/>
        <end position="239"/>
    </location>
</feature>
<feature type="topological domain" description="Lumenal" evidence="1">
    <location>
        <begin position="1"/>
        <end position="55"/>
    </location>
</feature>
<feature type="transmembrane region" description="Helical" evidence="1">
    <location>
        <begin position="56"/>
        <end position="83"/>
    </location>
</feature>
<feature type="topological domain" description="Cytoplasmic" evidence="1">
    <location>
        <begin position="84"/>
        <end position="137"/>
    </location>
</feature>
<feature type="transmembrane region" description="Helical" evidence="1">
    <location>
        <begin position="138"/>
        <end position="157"/>
    </location>
</feature>
<feature type="topological domain" description="Lumenal" evidence="1">
    <location>
        <begin position="158"/>
        <end position="171"/>
    </location>
</feature>
<feature type="intramembrane region" evidence="1">
    <location>
        <begin position="172"/>
        <end position="181"/>
    </location>
</feature>
<feature type="topological domain" description="Lumenal" evidence="1">
    <location>
        <begin position="182"/>
        <end position="191"/>
    </location>
</feature>
<feature type="transmembrane region" description="Helical" evidence="1">
    <location>
        <begin position="192"/>
        <end position="213"/>
    </location>
</feature>
<feature type="topological domain" description="Cytoplasmic" evidence="1">
    <location>
        <begin position="214"/>
        <end position="239"/>
    </location>
</feature>
<feature type="coiled-coil region" evidence="4">
    <location>
        <begin position="83"/>
        <end position="140"/>
    </location>
</feature>
<feature type="modified residue" description="Phosphoserine" evidence="20 22">
    <location>
        <position position="111"/>
    </location>
</feature>
<feature type="modified residue" description="Phosphoserine" evidence="20 21 22">
    <location>
        <position position="239"/>
    </location>
</feature>
<feature type="splice variant" id="VSP_060086" description="In isoform 3.">
    <location>
        <begin position="1"/>
        <end position="51"/>
    </location>
</feature>
<feature type="splice variant" id="VSP_019505" description="In isoform 2." evidence="16">
    <location>
        <begin position="115"/>
        <end position="133"/>
    </location>
</feature>
<feature type="sequence variant" id="VAR_076652" description="In CFSMR1." evidence="6">
    <location>
        <begin position="98"/>
        <end position="239"/>
    </location>
</feature>
<feature type="sequence variant" id="VAR_076653" description="In CFSMR1." evidence="9 10">
    <location>
        <begin position="138"/>
        <end position="239"/>
    </location>
</feature>
<feature type="mutagenesis site" description="Abolishes the calcium channel activity." evidence="11">
    <original>D</original>
    <variation>A</variation>
    <location>
        <position position="191"/>
    </location>
</feature>
<feature type="mutagenesis site" description="Retains some of the calcium channel activity." evidence="11">
    <original>D</original>
    <variation>E</variation>
    <location>
        <position position="191"/>
    </location>
</feature>
<feature type="sequence conflict" description="In Ref. 4; AAK07514/AAK07549." evidence="17" ref="4">
    <original>S</original>
    <variation>P</variation>
    <location>
        <position position="180"/>
    </location>
</feature>
<reference key="1">
    <citation type="journal article" date="1999" name="J. Biochem.">
        <title>Multi-ubiquitination of a nascent membrane protein produced in a rabbit reticulocyte lysate.</title>
        <authorList>
            <person name="Iwamuro S."/>
            <person name="Saeki M."/>
            <person name="Kato S."/>
        </authorList>
    </citation>
    <scope>NUCLEOTIDE SEQUENCE [MRNA] (ISOFORM 3)</scope>
    <scope>TISSUE SPECIFICITY</scope>
    <scope>SUBCELLULAR LOCATION</scope>
    <source>
        <tissue>Gastric adenocarcinoma</tissue>
    </source>
</reference>
<reference key="2">
    <citation type="submission" date="2004-09" db="EMBL/GenBank/DDBJ databases">
        <title>Identification of angiogenesis-related genes from placenta by xenogeneic antibody screening.</title>
        <authorList>
            <person name="Deng H.-X."/>
            <person name="Wei Y.-Q."/>
            <person name="Zhao X."/>
            <person name="Yang H.-S."/>
            <person name="Wang R."/>
            <person name="Yang J.-L."/>
        </authorList>
    </citation>
    <scope>NUCLEOTIDE SEQUENCE [MRNA] (ISOFORM 3)</scope>
    <source>
        <tissue>Placenta</tissue>
    </source>
</reference>
<reference key="3">
    <citation type="submission" date="1998-06" db="EMBL/GenBank/DDBJ databases">
        <authorList>
            <person name="Yu W."/>
            <person name="Gibbs R.A."/>
        </authorList>
    </citation>
    <scope>NUCLEOTIDE SEQUENCE [LARGE SCALE MRNA] OF 10-239 (ISOFORM 1)</scope>
    <source>
        <tissue>Brain</tissue>
    </source>
</reference>
<reference key="4">
    <citation type="submission" date="2000-06" db="EMBL/GenBank/DDBJ databases">
        <title>Human acute promyelocytic leukemia cell line NB4's apoptosis/differentiation related genes.</title>
        <authorList>
            <person name="Yu W.-Q."/>
            <person name="Sun B.-Z."/>
            <person name="Chai Y.-B."/>
            <person name="Zhu F."/>
            <person name="Liu X.-S."/>
            <person name="Li Z."/>
            <person name="Lu F."/>
            <person name="Yan W."/>
            <person name="Yang H."/>
            <person name="Zhao Z.-L."/>
        </authorList>
    </citation>
    <scope>NUCLEOTIDE SEQUENCE [LARGE SCALE MRNA] (ISOFORMS 2 AND 3)</scope>
    <source>
        <tissue>Promyelocytic leukemia</tissue>
    </source>
</reference>
<reference key="5">
    <citation type="journal article" date="2003" name="Genome Res.">
        <title>The secreted protein discovery initiative (SPDI), a large-scale effort to identify novel human secreted and transmembrane proteins: a bioinformatics assessment.</title>
        <authorList>
            <person name="Clark H.F."/>
            <person name="Gurney A.L."/>
            <person name="Abaya E."/>
            <person name="Baker K."/>
            <person name="Baldwin D.T."/>
            <person name="Brush J."/>
            <person name="Chen J."/>
            <person name="Chow B."/>
            <person name="Chui C."/>
            <person name="Crowley C."/>
            <person name="Currell B."/>
            <person name="Deuel B."/>
            <person name="Dowd P."/>
            <person name="Eaton D."/>
            <person name="Foster J.S."/>
            <person name="Grimaldi C."/>
            <person name="Gu Q."/>
            <person name="Hass P.E."/>
            <person name="Heldens S."/>
            <person name="Huang A."/>
            <person name="Kim H.S."/>
            <person name="Klimowski L."/>
            <person name="Jin Y."/>
            <person name="Johnson S."/>
            <person name="Lee J."/>
            <person name="Lewis L."/>
            <person name="Liao D."/>
            <person name="Mark M.R."/>
            <person name="Robbie E."/>
            <person name="Sanchez C."/>
            <person name="Schoenfeld J."/>
            <person name="Seshagiri S."/>
            <person name="Simmons L."/>
            <person name="Singh J."/>
            <person name="Smith V."/>
            <person name="Stinson J."/>
            <person name="Vagts A."/>
            <person name="Vandlen R.L."/>
            <person name="Watanabe C."/>
            <person name="Wieand D."/>
            <person name="Woods K."/>
            <person name="Xie M.-H."/>
            <person name="Yansura D.G."/>
            <person name="Yi S."/>
            <person name="Yu G."/>
            <person name="Yuan J."/>
            <person name="Zhang M."/>
            <person name="Zhang Z."/>
            <person name="Goddard A.D."/>
            <person name="Wood W.I."/>
            <person name="Godowski P.J."/>
            <person name="Gray A.M."/>
        </authorList>
    </citation>
    <scope>NUCLEOTIDE SEQUENCE [LARGE SCALE MRNA] (ISOFORM 3)</scope>
</reference>
<reference key="6">
    <citation type="journal article" date="2004" name="Nat. Genet.">
        <title>Complete sequencing and characterization of 21,243 full-length human cDNAs.</title>
        <authorList>
            <person name="Ota T."/>
            <person name="Suzuki Y."/>
            <person name="Nishikawa T."/>
            <person name="Otsuki T."/>
            <person name="Sugiyama T."/>
            <person name="Irie R."/>
            <person name="Wakamatsu A."/>
            <person name="Hayashi K."/>
            <person name="Sato H."/>
            <person name="Nagai K."/>
            <person name="Kimura K."/>
            <person name="Makita H."/>
            <person name="Sekine M."/>
            <person name="Obayashi M."/>
            <person name="Nishi T."/>
            <person name="Shibahara T."/>
            <person name="Tanaka T."/>
            <person name="Ishii S."/>
            <person name="Yamamoto J."/>
            <person name="Saito K."/>
            <person name="Kawai Y."/>
            <person name="Isono Y."/>
            <person name="Nakamura Y."/>
            <person name="Nagahari K."/>
            <person name="Murakami K."/>
            <person name="Yasuda T."/>
            <person name="Iwayanagi T."/>
            <person name="Wagatsuma M."/>
            <person name="Shiratori A."/>
            <person name="Sudo H."/>
            <person name="Hosoiri T."/>
            <person name="Kaku Y."/>
            <person name="Kodaira H."/>
            <person name="Kondo H."/>
            <person name="Sugawara M."/>
            <person name="Takahashi M."/>
            <person name="Kanda K."/>
            <person name="Yokoi T."/>
            <person name="Furuya T."/>
            <person name="Kikkawa E."/>
            <person name="Omura Y."/>
            <person name="Abe K."/>
            <person name="Kamihara K."/>
            <person name="Katsuta N."/>
            <person name="Sato K."/>
            <person name="Tanikawa M."/>
            <person name="Yamazaki M."/>
            <person name="Ninomiya K."/>
            <person name="Ishibashi T."/>
            <person name="Yamashita H."/>
            <person name="Murakawa K."/>
            <person name="Fujimori K."/>
            <person name="Tanai H."/>
            <person name="Kimata M."/>
            <person name="Watanabe M."/>
            <person name="Hiraoka S."/>
            <person name="Chiba Y."/>
            <person name="Ishida S."/>
            <person name="Ono Y."/>
            <person name="Takiguchi S."/>
            <person name="Watanabe S."/>
            <person name="Yosida M."/>
            <person name="Hotuta T."/>
            <person name="Kusano J."/>
            <person name="Kanehori K."/>
            <person name="Takahashi-Fujii A."/>
            <person name="Hara H."/>
            <person name="Tanase T.-O."/>
            <person name="Nomura Y."/>
            <person name="Togiya S."/>
            <person name="Komai F."/>
            <person name="Hara R."/>
            <person name="Takeuchi K."/>
            <person name="Arita M."/>
            <person name="Imose N."/>
            <person name="Musashino K."/>
            <person name="Yuuki H."/>
            <person name="Oshima A."/>
            <person name="Sasaki N."/>
            <person name="Aotsuka S."/>
            <person name="Yoshikawa Y."/>
            <person name="Matsunawa H."/>
            <person name="Ichihara T."/>
            <person name="Shiohata N."/>
            <person name="Sano S."/>
            <person name="Moriya S."/>
            <person name="Momiyama H."/>
            <person name="Satoh N."/>
            <person name="Takami S."/>
            <person name="Terashima Y."/>
            <person name="Suzuki O."/>
            <person name="Nakagawa S."/>
            <person name="Senoh A."/>
            <person name="Mizoguchi H."/>
            <person name="Goto Y."/>
            <person name="Shimizu F."/>
            <person name="Wakebe H."/>
            <person name="Hishigaki H."/>
            <person name="Watanabe T."/>
            <person name="Sugiyama A."/>
            <person name="Takemoto M."/>
            <person name="Kawakami B."/>
            <person name="Yamazaki M."/>
            <person name="Watanabe K."/>
            <person name="Kumagai A."/>
            <person name="Itakura S."/>
            <person name="Fukuzumi Y."/>
            <person name="Fujimori Y."/>
            <person name="Komiyama M."/>
            <person name="Tashiro H."/>
            <person name="Tanigami A."/>
            <person name="Fujiwara T."/>
            <person name="Ono T."/>
            <person name="Yamada K."/>
            <person name="Fujii Y."/>
            <person name="Ozaki K."/>
            <person name="Hirao M."/>
            <person name="Ohmori Y."/>
            <person name="Kawabata A."/>
            <person name="Hikiji T."/>
            <person name="Kobatake N."/>
            <person name="Inagaki H."/>
            <person name="Ikema Y."/>
            <person name="Okamoto S."/>
            <person name="Okitani R."/>
            <person name="Kawakami T."/>
            <person name="Noguchi S."/>
            <person name="Itoh T."/>
            <person name="Shigeta K."/>
            <person name="Senba T."/>
            <person name="Matsumura K."/>
            <person name="Nakajima Y."/>
            <person name="Mizuno T."/>
            <person name="Morinaga M."/>
            <person name="Sasaki M."/>
            <person name="Togashi T."/>
            <person name="Oyama M."/>
            <person name="Hata H."/>
            <person name="Watanabe M."/>
            <person name="Komatsu T."/>
            <person name="Mizushima-Sugano J."/>
            <person name="Satoh T."/>
            <person name="Shirai Y."/>
            <person name="Takahashi Y."/>
            <person name="Nakagawa K."/>
            <person name="Okumura K."/>
            <person name="Nagase T."/>
            <person name="Nomura N."/>
            <person name="Kikuchi H."/>
            <person name="Masuho Y."/>
            <person name="Yamashita R."/>
            <person name="Nakai K."/>
            <person name="Yada T."/>
            <person name="Nakamura Y."/>
            <person name="Ohara O."/>
            <person name="Isogai T."/>
            <person name="Sugano S."/>
        </authorList>
    </citation>
    <scope>NUCLEOTIDE SEQUENCE [LARGE SCALE MRNA] (ISOFORM 3)</scope>
    <source>
        <tissue>Trachea</tissue>
    </source>
</reference>
<reference key="7">
    <citation type="journal article" date="2006" name="Nature">
        <title>The DNA sequence and biological annotation of human chromosome 1.</title>
        <authorList>
            <person name="Gregory S.G."/>
            <person name="Barlow K.F."/>
            <person name="McLay K.E."/>
            <person name="Kaul R."/>
            <person name="Swarbreck D."/>
            <person name="Dunham A."/>
            <person name="Scott C.E."/>
            <person name="Howe K.L."/>
            <person name="Woodfine K."/>
            <person name="Spencer C.C.A."/>
            <person name="Jones M.C."/>
            <person name="Gillson C."/>
            <person name="Searle S."/>
            <person name="Zhou Y."/>
            <person name="Kokocinski F."/>
            <person name="McDonald L."/>
            <person name="Evans R."/>
            <person name="Phillips K."/>
            <person name="Atkinson A."/>
            <person name="Cooper R."/>
            <person name="Jones C."/>
            <person name="Hall R.E."/>
            <person name="Andrews T.D."/>
            <person name="Lloyd C."/>
            <person name="Ainscough R."/>
            <person name="Almeida J.P."/>
            <person name="Ambrose K.D."/>
            <person name="Anderson F."/>
            <person name="Andrew R.W."/>
            <person name="Ashwell R.I.S."/>
            <person name="Aubin K."/>
            <person name="Babbage A.K."/>
            <person name="Bagguley C.L."/>
            <person name="Bailey J."/>
            <person name="Beasley H."/>
            <person name="Bethel G."/>
            <person name="Bird C.P."/>
            <person name="Bray-Allen S."/>
            <person name="Brown J.Y."/>
            <person name="Brown A.J."/>
            <person name="Buckley D."/>
            <person name="Burton J."/>
            <person name="Bye J."/>
            <person name="Carder C."/>
            <person name="Chapman J.C."/>
            <person name="Clark S.Y."/>
            <person name="Clarke G."/>
            <person name="Clee C."/>
            <person name="Cobley V."/>
            <person name="Collier R.E."/>
            <person name="Corby N."/>
            <person name="Coville G.J."/>
            <person name="Davies J."/>
            <person name="Deadman R."/>
            <person name="Dunn M."/>
            <person name="Earthrowl M."/>
            <person name="Ellington A.G."/>
            <person name="Errington H."/>
            <person name="Frankish A."/>
            <person name="Frankland J."/>
            <person name="French L."/>
            <person name="Garner P."/>
            <person name="Garnett J."/>
            <person name="Gay L."/>
            <person name="Ghori M.R.J."/>
            <person name="Gibson R."/>
            <person name="Gilby L.M."/>
            <person name="Gillett W."/>
            <person name="Glithero R.J."/>
            <person name="Grafham D.V."/>
            <person name="Griffiths C."/>
            <person name="Griffiths-Jones S."/>
            <person name="Grocock R."/>
            <person name="Hammond S."/>
            <person name="Harrison E.S.I."/>
            <person name="Hart E."/>
            <person name="Haugen E."/>
            <person name="Heath P.D."/>
            <person name="Holmes S."/>
            <person name="Holt K."/>
            <person name="Howden P.J."/>
            <person name="Hunt A.R."/>
            <person name="Hunt S.E."/>
            <person name="Hunter G."/>
            <person name="Isherwood J."/>
            <person name="James R."/>
            <person name="Johnson C."/>
            <person name="Johnson D."/>
            <person name="Joy A."/>
            <person name="Kay M."/>
            <person name="Kershaw J.K."/>
            <person name="Kibukawa M."/>
            <person name="Kimberley A.M."/>
            <person name="King A."/>
            <person name="Knights A.J."/>
            <person name="Lad H."/>
            <person name="Laird G."/>
            <person name="Lawlor S."/>
            <person name="Leongamornlert D.A."/>
            <person name="Lloyd D.M."/>
            <person name="Loveland J."/>
            <person name="Lovell J."/>
            <person name="Lush M.J."/>
            <person name="Lyne R."/>
            <person name="Martin S."/>
            <person name="Mashreghi-Mohammadi M."/>
            <person name="Matthews L."/>
            <person name="Matthews N.S.W."/>
            <person name="McLaren S."/>
            <person name="Milne S."/>
            <person name="Mistry S."/>
            <person name="Moore M.J.F."/>
            <person name="Nickerson T."/>
            <person name="O'Dell C.N."/>
            <person name="Oliver K."/>
            <person name="Palmeiri A."/>
            <person name="Palmer S.A."/>
            <person name="Parker A."/>
            <person name="Patel D."/>
            <person name="Pearce A.V."/>
            <person name="Peck A.I."/>
            <person name="Pelan S."/>
            <person name="Phelps K."/>
            <person name="Phillimore B.J."/>
            <person name="Plumb R."/>
            <person name="Rajan J."/>
            <person name="Raymond C."/>
            <person name="Rouse G."/>
            <person name="Saenphimmachak C."/>
            <person name="Sehra H.K."/>
            <person name="Sheridan E."/>
            <person name="Shownkeen R."/>
            <person name="Sims S."/>
            <person name="Skuce C.D."/>
            <person name="Smith M."/>
            <person name="Steward C."/>
            <person name="Subramanian S."/>
            <person name="Sycamore N."/>
            <person name="Tracey A."/>
            <person name="Tromans A."/>
            <person name="Van Helmond Z."/>
            <person name="Wall M."/>
            <person name="Wallis J.M."/>
            <person name="White S."/>
            <person name="Whitehead S.L."/>
            <person name="Wilkinson J.E."/>
            <person name="Willey D.L."/>
            <person name="Williams H."/>
            <person name="Wilming L."/>
            <person name="Wray P.W."/>
            <person name="Wu Z."/>
            <person name="Coulson A."/>
            <person name="Vaudin M."/>
            <person name="Sulston J.E."/>
            <person name="Durbin R.M."/>
            <person name="Hubbard T."/>
            <person name="Wooster R."/>
            <person name="Dunham I."/>
            <person name="Carter N.P."/>
            <person name="McVean G."/>
            <person name="Ross M.T."/>
            <person name="Harrow J."/>
            <person name="Olson M.V."/>
            <person name="Beck S."/>
            <person name="Rogers J."/>
            <person name="Bentley D.R."/>
        </authorList>
    </citation>
    <scope>NUCLEOTIDE SEQUENCE [LARGE SCALE GENOMIC DNA]</scope>
</reference>
<reference key="8">
    <citation type="submission" date="2005-07" db="EMBL/GenBank/DDBJ databases">
        <authorList>
            <person name="Mural R.J."/>
            <person name="Istrail S."/>
            <person name="Sutton G.G."/>
            <person name="Florea L."/>
            <person name="Halpern A.L."/>
            <person name="Mobarry C.M."/>
            <person name="Lippert R."/>
            <person name="Walenz B."/>
            <person name="Shatkay H."/>
            <person name="Dew I."/>
            <person name="Miller J.R."/>
            <person name="Flanigan M.J."/>
            <person name="Edwards N.J."/>
            <person name="Bolanos R."/>
            <person name="Fasulo D."/>
            <person name="Halldorsson B.V."/>
            <person name="Hannenhalli S."/>
            <person name="Turner R."/>
            <person name="Yooseph S."/>
            <person name="Lu F."/>
            <person name="Nusskern D.R."/>
            <person name="Shue B.C."/>
            <person name="Zheng X.H."/>
            <person name="Zhong F."/>
            <person name="Delcher A.L."/>
            <person name="Huson D.H."/>
            <person name="Kravitz S.A."/>
            <person name="Mouchard L."/>
            <person name="Reinert K."/>
            <person name="Remington K.A."/>
            <person name="Clark A.G."/>
            <person name="Waterman M.S."/>
            <person name="Eichler E.E."/>
            <person name="Adams M.D."/>
            <person name="Hunkapiller M.W."/>
            <person name="Myers E.W."/>
            <person name="Venter J.C."/>
        </authorList>
    </citation>
    <scope>NUCLEOTIDE SEQUENCE [LARGE SCALE GENOMIC DNA]</scope>
</reference>
<reference key="9">
    <citation type="journal article" date="2004" name="Genome Res.">
        <title>The status, quality, and expansion of the NIH full-length cDNA project: the Mammalian Gene Collection (MGC).</title>
        <authorList>
            <consortium name="The MGC Project Team"/>
        </authorList>
    </citation>
    <scope>NUCLEOTIDE SEQUENCE [LARGE SCALE MRNA] (ISOFORM 3)</scope>
    <source>
        <tissue>Placenta</tissue>
    </source>
</reference>
<reference key="10">
    <citation type="journal article" date="2006" name="Cell">
        <title>Global, in vivo, and site-specific phosphorylation dynamics in signaling networks.</title>
        <authorList>
            <person name="Olsen J.V."/>
            <person name="Blagoev B."/>
            <person name="Gnad F."/>
            <person name="Macek B."/>
            <person name="Kumar C."/>
            <person name="Mortensen P."/>
            <person name="Mann M."/>
        </authorList>
    </citation>
    <scope>IDENTIFICATION BY MASS SPECTROMETRY [LARGE SCALE ANALYSIS]</scope>
    <source>
        <tissue>Cervix carcinoma</tissue>
    </source>
</reference>
<reference key="11">
    <citation type="journal article" date="2008" name="Mol. Cell">
        <title>Kinase-selective enrichment enables quantitative phosphoproteomics of the kinome across the cell cycle.</title>
        <authorList>
            <person name="Daub H."/>
            <person name="Olsen J.V."/>
            <person name="Bairlein M."/>
            <person name="Gnad F."/>
            <person name="Oppermann F.S."/>
            <person name="Korner R."/>
            <person name="Greff Z."/>
            <person name="Keri G."/>
            <person name="Stemmann O."/>
            <person name="Mann M."/>
        </authorList>
    </citation>
    <scope>PHOSPHORYLATION [LARGE SCALE ANALYSIS] AT SER-239</scope>
    <scope>IDENTIFICATION BY MASS SPECTROMETRY [LARGE SCALE ANALYSIS]</scope>
    <source>
        <tissue>Cervix carcinoma</tissue>
    </source>
</reference>
<reference key="12">
    <citation type="journal article" date="2008" name="Proc. Natl. Acad. Sci. U.S.A.">
        <title>A quantitative atlas of mitotic phosphorylation.</title>
        <authorList>
            <person name="Dephoure N."/>
            <person name="Zhou C."/>
            <person name="Villen J."/>
            <person name="Beausoleil S.A."/>
            <person name="Bakalarski C.E."/>
            <person name="Elledge S.J."/>
            <person name="Gygi S.P."/>
        </authorList>
    </citation>
    <scope>PHOSPHORYLATION [LARGE SCALE ANALYSIS] AT SER-111 AND SER-239</scope>
    <scope>IDENTIFICATION BY MASS SPECTROMETRY [LARGE SCALE ANALYSIS]</scope>
    <source>
        <tissue>Cervix carcinoma</tissue>
    </source>
</reference>
<reference key="13">
    <citation type="journal article" date="2010" name="Proc. Natl. Acad. Sci. U.S.A.">
        <title>Homozygous frameshift mutation in TMCO1 causes a syndrome with craniofacial dysmorphism, skeletal anomalies, and mental retardation.</title>
        <authorList>
            <person name="Xin B."/>
            <person name="Puffenberger E.G."/>
            <person name="Turben S."/>
            <person name="Tan H."/>
            <person name="Zhou A."/>
            <person name="Wang H."/>
        </authorList>
    </citation>
    <scope>INVOLVEMENT IN CFSMR1</scope>
    <scope>TISSUE SPECIFICITY</scope>
    <scope>VARIANT CFSMR1 98-SER--SER-239 DEL</scope>
</reference>
<reference key="14">
    <citation type="journal article" date="2010" name="Sci. Signal.">
        <title>Quantitative phosphoproteomics reveals widespread full phosphorylation site occupancy during mitosis.</title>
        <authorList>
            <person name="Olsen J.V."/>
            <person name="Vermeulen M."/>
            <person name="Santamaria A."/>
            <person name="Kumar C."/>
            <person name="Miller M.L."/>
            <person name="Jensen L.J."/>
            <person name="Gnad F."/>
            <person name="Cox J."/>
            <person name="Jensen T.S."/>
            <person name="Nigg E.A."/>
            <person name="Brunak S."/>
            <person name="Mann M."/>
        </authorList>
    </citation>
    <scope>PHOSPHORYLATION [LARGE SCALE ANALYSIS] AT SER-111 AND SER-239</scope>
    <scope>IDENTIFICATION BY MASS SPECTROMETRY [LARGE SCALE ANALYSIS]</scope>
    <source>
        <tissue>Cervix carcinoma</tissue>
    </source>
</reference>
<reference key="15">
    <citation type="journal article" date="2011" name="BMC Syst. Biol.">
        <title>Initial characterization of the human central proteome.</title>
        <authorList>
            <person name="Burkard T.R."/>
            <person name="Planyavsky M."/>
            <person name="Kaupe I."/>
            <person name="Breitwieser F.P."/>
            <person name="Buerckstuemmer T."/>
            <person name="Bennett K.L."/>
            <person name="Superti-Furga G."/>
            <person name="Colinge J."/>
        </authorList>
    </citation>
    <scope>IDENTIFICATION BY MASS SPECTROMETRY [LARGE SCALE ANALYSIS]</scope>
</reference>
<reference key="16">
    <citation type="journal article" date="2011" name="Nat. Genet.">
        <title>Genome-wide association study identifies susceptibility loci for open angle glaucoma at TMCO1 and CDKN2B-AS1.</title>
        <authorList>
            <person name="Burdon K.P."/>
            <person name="Macgregor S."/>
            <person name="Hewitt A.W."/>
            <person name="Sharma S."/>
            <person name="Chidlow G."/>
            <person name="Mills R.A."/>
            <person name="Danoy P."/>
            <person name="Casson R."/>
            <person name="Viswanathan A.C."/>
            <person name="Liu J.Z."/>
            <person name="Landers J."/>
            <person name="Henders A.K."/>
            <person name="Wood J."/>
            <person name="Souzeau E."/>
            <person name="Crawford A."/>
            <person name="Leo P."/>
            <person name="Wang J.J."/>
            <person name="Rochtchina E."/>
            <person name="Nyholt D.R."/>
            <person name="Martin N.G."/>
            <person name="Montgomery G.W."/>
            <person name="Mitchell P."/>
            <person name="Brown M.A."/>
            <person name="Mackey D.A."/>
            <person name="Craig J.E."/>
        </authorList>
    </citation>
    <scope>INVOLVEMENT IN POAG</scope>
</reference>
<reference key="17">
    <citation type="journal article" date="2012" name="Invest. Ophthalmol. Vis. Sci.">
        <title>Association of genetic variants in the TMCO1 gene with clinical parameters related to glaucoma and characterization of the protein in the eye.</title>
        <authorList>
            <person name="Sharma S."/>
            <person name="Burdon K.P."/>
            <person name="Chidlow G."/>
            <person name="Klebe S."/>
            <person name="Crawford A."/>
            <person name="Dimasi D.P."/>
            <person name="Dave A."/>
            <person name="Martin S."/>
            <person name="Javadiyan S."/>
            <person name="Wood J.P."/>
            <person name="Casson R."/>
            <person name="Danoy P."/>
            <person name="Griggs K."/>
            <person name="Hewitt A.W."/>
            <person name="Landers J."/>
            <person name="Mitchell P."/>
            <person name="Mackey D.A."/>
            <person name="Craig J.E."/>
        </authorList>
    </citation>
    <scope>INVOLVEMENT IN POAG</scope>
    <scope>TISSUE SPECIFICITY</scope>
</reference>
<reference key="18">
    <citation type="journal article" date="2015" name="Proteomics">
        <title>N-terminome analysis of the human mitochondrial proteome.</title>
        <authorList>
            <person name="Vaca Jacome A.S."/>
            <person name="Rabilloud T."/>
            <person name="Schaeffer-Reiss C."/>
            <person name="Rompais M."/>
            <person name="Ayoub D."/>
            <person name="Lane L."/>
            <person name="Bairoch A."/>
            <person name="Van Dorsselaer A."/>
            <person name="Carapito C."/>
        </authorList>
    </citation>
    <scope>IDENTIFICATION BY MASS SPECTROMETRY [LARGE SCALE ANALYSIS]</scope>
</reference>
<reference key="19">
    <citation type="journal article" date="2013" name="Clin. Genet.">
        <title>Whole-exome sequencing identified a patient with TMCO1 defect syndrome and expands the phenotic spectrum.</title>
        <authorList>
            <person name="Caglayan A.O."/>
            <person name="Per H."/>
            <person name="Akgumus G."/>
            <person name="Gumus H."/>
            <person name="Baranoski J."/>
            <person name="Canpolat M."/>
            <person name="Calik M."/>
            <person name="Yikilmaz A."/>
            <person name="Bilguvar K."/>
            <person name="Kumandas S."/>
            <person name="Gunel M."/>
        </authorList>
    </citation>
    <scope>VARIANT CFSMR1 138-ARG--SER-239 DEL</scope>
</reference>
<reference key="20">
    <citation type="journal article" date="2014" name="Am. J. Med. Genet. A">
        <title>TMCO1 deficiency causes autosomal recessive cerebrofaciothoracic dysplasia.</title>
        <authorList>
            <person name="Alanay Y."/>
            <person name="Erguener B."/>
            <person name="Utine E."/>
            <person name="Hacariz O."/>
            <person name="Kiper P.O."/>
            <person name="Taskiran E.Z."/>
            <person name="Percin F."/>
            <person name="Uz E."/>
            <person name="Sagiroglu M.S."/>
            <person name="Yuksel B."/>
            <person name="Boduroglu K."/>
            <person name="Akarsu N.A."/>
        </authorList>
    </citation>
    <scope>VARIANT CFSMR1 138-ARG--SER-239 DEL</scope>
</reference>
<reference key="21">
    <citation type="journal article" date="2016" name="Cell">
        <title>TMCO1 is an ER Ca(2+) load-activated Ca(2+) channel.</title>
        <authorList>
            <person name="Wang Q.C."/>
            <person name="Zheng Q."/>
            <person name="Tan H."/>
            <person name="Zhang B."/>
            <person name="Li X."/>
            <person name="Yang Y."/>
            <person name="Yu J."/>
            <person name="Liu Y."/>
            <person name="Chai H."/>
            <person name="Wang X."/>
            <person name="Sun Z."/>
            <person name="Wang J.Q."/>
            <person name="Zhu S."/>
            <person name="Wang F."/>
            <person name="Yang M."/>
            <person name="Guo C."/>
            <person name="Wang H."/>
            <person name="Zheng Q."/>
            <person name="Li Y."/>
            <person name="Chen Q."/>
            <person name="Zhou A."/>
            <person name="Tang T.S."/>
        </authorList>
    </citation>
    <scope>FUNCTION</scope>
    <scope>TRANSPORTER ACTIVITY</scope>
    <scope>SUBCELLULAR LOCATION</scope>
    <scope>SUBUNIT</scope>
    <scope>MUTAGENESIS OF ASP-191</scope>
</reference>
<reference key="22">
    <citation type="journal article" date="2022" name="Nature">
        <title>Substrate-driven assembly of a translocon for multipass membrane proteins.</title>
        <authorList>
            <person name="Sundaram A."/>
            <person name="Yamsek M."/>
            <person name="Zhong F."/>
            <person name="Hooda Y."/>
            <person name="Hegde R.S."/>
            <person name="Keenan R.J."/>
        </authorList>
    </citation>
    <scope>FUNCTION</scope>
    <scope>IDENTIFICATION IN THE MULTI-PASS TRANSLOCON COMPLEX</scope>
    <scope>SUBCELLULAR LOCATION</scope>
</reference>
<reference key="23">
    <citation type="journal article" date="2020" name="Elife">
        <title>An ER translocon for multi-pass membrane protein biogenesis.</title>
        <authorList>
            <person name="McGilvray P.T."/>
            <person name="Anghel S.A."/>
            <person name="Sundaram A."/>
            <person name="Zhong F."/>
            <person name="Trnka M.J."/>
            <person name="Fuller J.R."/>
            <person name="Hu H."/>
            <person name="Burlingame A.L."/>
            <person name="Keenan R.J."/>
        </authorList>
    </citation>
    <scope>STRUCTURE BY ELECTRON MICROSCOPY (3.8 ANGSTROMS) OF 52-239 IN COMPLEX WITH THE RIBOSOME-ASSOCIATED ER TRANSLOCON COMPLEX</scope>
    <scope>FUNCTION</scope>
    <scope>INTERACTION WITH CCDC47; NCLN; NOMO; TMEM147; SEC61A1; SEC61B AND SEC61G</scope>
</reference>
<accession>Q9UM00</accession>
<accession>B2REA0</accession>
<accession>J9JIE6</accession>
<accession>O75545</accession>
<accession>Q9BZS3</accession>
<accession>Q9BZU8</accession>
<comment type="function">
    <text evidence="3 11 12 13">Endoplasmic reticulum (ER) calcium-selective channel preventing intracellular Ca2(+) stores from overfilling and maintaining calcium homeostasis in the ER (PubMed:27212239). In response to endoplasmic reticulum (ER) Ca2(+) overloading, assembles into a homotetramer, forming a functional calcium-selective channel facilitating Ca2(+) release (PubMed:27212239). Mediates ER Ca2(+) homeostasis in osteoblasts and plays a key role in bone formation, via the CaMKII-HDAC4-RUNX2 signaling axis (By similarity). Component of the multi-pass translocon (MPT) complex that mediates insertion of multi-pass membrane proteins into the lipid bilayer of membranes (PubMed:32820719, PubMed:36261522). The MPT complex takes over after the SEC61 complex: following membrane insertion of the first few transmembrane segments of proteins by the SEC61 complex, the MPT complex occludes the lateral gate of the SEC61 complex to promote insertion of subsequent transmembrane regions (PubMed:36261522). Within the MPT complex, the GEL subcomplex may mediate insertion of transmembrane regions into the membrane (PubMed:36261522).</text>
</comment>
<comment type="catalytic activity">
    <reaction evidence="11">
        <text>Ca(2+)(in) = Ca(2+)(out)</text>
        <dbReference type="Rhea" id="RHEA:29671"/>
        <dbReference type="ChEBI" id="CHEBI:29108"/>
    </reaction>
</comment>
<comment type="subunit">
    <text evidence="11 12 13">Homodimer and homotetramer (PubMed:27212239). Homodimer under resting conditions; forms homotetramers following ER calcium overload (PubMed:27212239). Component of the GET- and EMC-like (GEL) complex, composed of RAB5IF/OPTI and TMCO1 (PubMed:36261522). The GEL complex is part of the multi-pass translocon (MPT) complex, composed of three subcomplexes, the GEL complex (composed of RAB5IF/OPTI and TMCO1), the BOS complex (composed of NCLN/Nicalin, NOMO and TMEM147) and the PAT complex (composed of WDR83OS/Asterix and CCDC47) (PubMed:32820719, PubMed:36261522). The MPT complex associates with the SEC61 complex (PubMed:36261522).</text>
</comment>
<comment type="interaction">
    <interactant intactId="EBI-11614122">
        <id>Q9UM00-1</id>
    </interactant>
    <interactant intactId="EBI-12084444">
        <id>Q7Z3Y9</id>
        <label>KRT26</label>
    </interactant>
    <organismsDiffer>false</organismsDiffer>
    <experiments>3</experiments>
</comment>
<comment type="subcellular location">
    <subcellularLocation>
        <location evidence="5 11 13">Endoplasmic reticulum membrane</location>
        <topology evidence="5 11">Multi-pass membrane protein</topology>
    </subcellularLocation>
    <subcellularLocation>
        <location evidence="5">Golgi apparatus membrane</location>
        <topology evidence="5">Multi-pass membrane protein</topology>
    </subcellularLocation>
    <subcellularLocation>
        <location evidence="2">Mitochondrion membrane</location>
        <topology evidence="5">Multi-pass membrane protein</topology>
    </subcellularLocation>
    <text evidence="5 8 11">The first transmembrane region is required for localization to the endoplasmic reticulum (PubMed:27212239). A publication reported localization in cytoplasm and nucleus (PubMed:22714896). Nuclear localization is however in contradiction with two other reports (PubMed:10393320, PubMed:27212239).</text>
</comment>
<comment type="alternative products">
    <event type="alternative splicing"/>
    <event type="alternative initiation"/>
    <isoform>
        <id>Q9UM00-3</id>
        <name>1</name>
        <sequence type="displayed"/>
    </isoform>
    <isoform>
        <id>Q9UM00-2</id>
        <name>2</name>
        <sequence type="described" ref="VSP_019505"/>
    </isoform>
    <isoform>
        <id>Q9UM00-1</id>
        <name>3</name>
        <sequence type="described" ref="VSP_060086"/>
    </isoform>
</comment>
<comment type="tissue specificity">
    <text evidence="5 6 8">Widely expressed in adult and fetal tissues, with higher levels in thymus, prostate, testis and small intestine and lower levels in brain, placenta, lung and kidney (PubMed:10393320, PubMed:20018682). Present in most tissues in the eye, including the trabecular meshwork and retina (at protein level) (PubMed:22714896).</text>
</comment>
<comment type="disease" evidence="6 9 10">
    <disease id="DI-03178">
        <name>Craniofacial dysmorphism, skeletal anomalies and impaired intellectual development syndrome 1</name>
        <acronym>CFSMR1</acronym>
        <description>An autosomal recessive disorder characterized by craniofacial and skeletal anomalies, associated with intellectual disability. Typical craniofacial dysmorphism include brachycephaly, highly arched bushy eyebrows, synophrys, long eyelashes, low-set ears, microdontism of primary teeth, and generalized gingival hyperplasia, whereas Sprengel deformity of scapula, fusion of spine, rib abnormities, pectus excavatum, and pes planus represent skeletal anomalies.</description>
        <dbReference type="MIM" id="213980"/>
    </disease>
    <text>The disease is caused by variants affecting the gene represented in this entry.</text>
</comment>
<comment type="disease" evidence="7 8">
    <disease id="DI-00936">
        <name>Glaucoma, primary open angle</name>
        <acronym>POAG</acronym>
        <description>A complex and genetically heterogeneous ocular disorder characterized by a specific pattern of optic nerve and visual field defects. The angle of the anterior chamber of the eye is open, and usually the intraocular pressure is increased. However, glaucoma can occur at any intraocular pressure. The disease is generally asymptomatic until the late stages, by which time significant and irreversible optic nerve damage has already taken place. In some cases, POAG shows digenic inheritance involving mutations in CYP1B1 and MYOC genes.</description>
        <dbReference type="MIM" id="137760"/>
    </disease>
    <text>Disease susceptibility is associated with variants affecting the gene represented in this entry.</text>
</comment>
<comment type="similarity">
    <text evidence="17">Belongs to the TMCO1 family.</text>
</comment>
<comment type="sequence caution" evidence="17">
    <conflict type="frameshift">
        <sequence resource="EMBL-CDS" id="AAK07514"/>
    </conflict>
</comment>
<comment type="sequence caution" evidence="17">
    <conflict type="frameshift">
        <sequence resource="EMBL-CDS" id="AAK07549"/>
    </conflict>
</comment>